<evidence type="ECO:0000255" key="1">
    <source>
        <dbReference type="HAMAP-Rule" id="MF_01334"/>
    </source>
</evidence>
<evidence type="ECO:0000305" key="2"/>
<accession>Q7VG30</accession>
<reference key="1">
    <citation type="journal article" date="2003" name="Proc. Natl. Acad. Sci. U.S.A.">
        <title>The complete genome sequence of the carcinogenic bacterium Helicobacter hepaticus.</title>
        <authorList>
            <person name="Suerbaum S."/>
            <person name="Josenhans C."/>
            <person name="Sterzenbach T."/>
            <person name="Drescher B."/>
            <person name="Brandt P."/>
            <person name="Bell M."/>
            <person name="Droege M."/>
            <person name="Fartmann B."/>
            <person name="Fischer H.-P."/>
            <person name="Ge Z."/>
            <person name="Hoerster A."/>
            <person name="Holland R."/>
            <person name="Klein K."/>
            <person name="Koenig J."/>
            <person name="Macko L."/>
            <person name="Mendz G.L."/>
            <person name="Nyakatura G."/>
            <person name="Schauer D.B."/>
            <person name="Shen Z."/>
            <person name="Weber J."/>
            <person name="Frosch M."/>
            <person name="Fox J.G."/>
        </authorList>
    </citation>
    <scope>NUCLEOTIDE SEQUENCE [LARGE SCALE GENOMIC DNA]</scope>
    <source>
        <strain>ATCC 51449 / 3B1</strain>
    </source>
</reference>
<sequence>MLEGQIRESISKSQAKALRNDGYLIANIYGKGQQNIHCAFKLNDFIKAMKQKTTLIFPVQVGGKTLEVVIQEYQKDPVTNTLIHVDLLLAQKGILNKYKVPVIVKGNAKGLKNKGVLFISTKRISVKCAAENLPNAYEIDVSDLDVGDSILIRDLPQFDNVNVLNRPSVAVVGVIKAK</sequence>
<name>RL25_HELHP</name>
<proteinExistence type="inferred from homology"/>
<dbReference type="EMBL" id="AE017125">
    <property type="protein sequence ID" value="AAP78091.1"/>
    <property type="molecule type" value="Genomic_DNA"/>
</dbReference>
<dbReference type="RefSeq" id="WP_011116334.1">
    <property type="nucleotide sequence ID" value="NC_004917.1"/>
</dbReference>
<dbReference type="SMR" id="Q7VG30"/>
<dbReference type="STRING" id="235279.HH_1494"/>
<dbReference type="KEGG" id="hhe:HH_1494"/>
<dbReference type="eggNOG" id="COG1825">
    <property type="taxonomic scope" value="Bacteria"/>
</dbReference>
<dbReference type="HOGENOM" id="CLU_075939_2_2_7"/>
<dbReference type="OrthoDB" id="5339138at2"/>
<dbReference type="Proteomes" id="UP000002495">
    <property type="component" value="Chromosome"/>
</dbReference>
<dbReference type="GO" id="GO:0022625">
    <property type="term" value="C:cytosolic large ribosomal subunit"/>
    <property type="evidence" value="ECO:0007669"/>
    <property type="project" value="TreeGrafter"/>
</dbReference>
<dbReference type="GO" id="GO:0008097">
    <property type="term" value="F:5S rRNA binding"/>
    <property type="evidence" value="ECO:0007669"/>
    <property type="project" value="InterPro"/>
</dbReference>
<dbReference type="GO" id="GO:0003735">
    <property type="term" value="F:structural constituent of ribosome"/>
    <property type="evidence" value="ECO:0007669"/>
    <property type="project" value="InterPro"/>
</dbReference>
<dbReference type="GO" id="GO:0006412">
    <property type="term" value="P:translation"/>
    <property type="evidence" value="ECO:0007669"/>
    <property type="project" value="UniProtKB-UniRule"/>
</dbReference>
<dbReference type="CDD" id="cd00495">
    <property type="entry name" value="Ribosomal_L25_TL5_CTC"/>
    <property type="match status" value="1"/>
</dbReference>
<dbReference type="Gene3D" id="2.170.120.20">
    <property type="entry name" value="Ribosomal protein L25, beta domain"/>
    <property type="match status" value="1"/>
</dbReference>
<dbReference type="Gene3D" id="2.40.240.10">
    <property type="entry name" value="Ribosomal Protein L25, Chain P"/>
    <property type="match status" value="1"/>
</dbReference>
<dbReference type="HAMAP" id="MF_01334">
    <property type="entry name" value="Ribosomal_bL25_CTC"/>
    <property type="match status" value="1"/>
</dbReference>
<dbReference type="InterPro" id="IPR020056">
    <property type="entry name" value="Rbsml_bL25/Gln-tRNA_synth_N"/>
</dbReference>
<dbReference type="InterPro" id="IPR011035">
    <property type="entry name" value="Ribosomal_bL25/Gln-tRNA_synth"/>
</dbReference>
<dbReference type="InterPro" id="IPR020057">
    <property type="entry name" value="Ribosomal_bL25_b-dom"/>
</dbReference>
<dbReference type="InterPro" id="IPR037121">
    <property type="entry name" value="Ribosomal_bL25_C"/>
</dbReference>
<dbReference type="InterPro" id="IPR001021">
    <property type="entry name" value="Ribosomal_bL25_long"/>
</dbReference>
<dbReference type="InterPro" id="IPR029751">
    <property type="entry name" value="Ribosomal_L25_dom"/>
</dbReference>
<dbReference type="InterPro" id="IPR020930">
    <property type="entry name" value="Ribosomal_uL5_bac-type"/>
</dbReference>
<dbReference type="NCBIfam" id="TIGR00731">
    <property type="entry name" value="bL25_bact_ctc"/>
    <property type="match status" value="1"/>
</dbReference>
<dbReference type="NCBIfam" id="NF004129">
    <property type="entry name" value="PRK05618.1-4"/>
    <property type="match status" value="1"/>
</dbReference>
<dbReference type="PANTHER" id="PTHR33284">
    <property type="entry name" value="RIBOSOMAL PROTEIN L25/GLN-TRNA SYNTHETASE, ANTI-CODON-BINDING DOMAIN-CONTAINING PROTEIN"/>
    <property type="match status" value="1"/>
</dbReference>
<dbReference type="PANTHER" id="PTHR33284:SF1">
    <property type="entry name" value="RIBOSOMAL PROTEIN L25_GLN-TRNA SYNTHETASE, ANTI-CODON-BINDING DOMAIN-CONTAINING PROTEIN"/>
    <property type="match status" value="1"/>
</dbReference>
<dbReference type="Pfam" id="PF01386">
    <property type="entry name" value="Ribosomal_L25p"/>
    <property type="match status" value="1"/>
</dbReference>
<dbReference type="Pfam" id="PF14693">
    <property type="entry name" value="Ribosomal_TL5_C"/>
    <property type="match status" value="1"/>
</dbReference>
<dbReference type="SUPFAM" id="SSF50715">
    <property type="entry name" value="Ribosomal protein L25-like"/>
    <property type="match status" value="1"/>
</dbReference>
<gene>
    <name evidence="1" type="primary">rplY</name>
    <name evidence="1" type="synonym">ctc</name>
    <name type="ordered locus">HH_1494</name>
</gene>
<protein>
    <recommendedName>
        <fullName evidence="1">Large ribosomal subunit protein bL25</fullName>
    </recommendedName>
    <alternativeName>
        <fullName evidence="2">50S ribosomal protein L25</fullName>
    </alternativeName>
    <alternativeName>
        <fullName evidence="1">General stress protein CTC</fullName>
    </alternativeName>
</protein>
<keyword id="KW-1185">Reference proteome</keyword>
<keyword id="KW-0687">Ribonucleoprotein</keyword>
<keyword id="KW-0689">Ribosomal protein</keyword>
<keyword id="KW-0694">RNA-binding</keyword>
<keyword id="KW-0699">rRNA-binding</keyword>
<feature type="chain" id="PRO_0000181553" description="Large ribosomal subunit protein bL25">
    <location>
        <begin position="1"/>
        <end position="178"/>
    </location>
</feature>
<comment type="function">
    <text evidence="1">This is one of the proteins that binds to the 5S RNA in the ribosome where it forms part of the central protuberance.</text>
</comment>
<comment type="subunit">
    <text evidence="1">Part of the 50S ribosomal subunit; part of the 5S rRNA/L5/L18/L25 subcomplex. Contacts the 5S rRNA. Binds to the 5S rRNA independently of L5 and L18.</text>
</comment>
<comment type="similarity">
    <text evidence="1">Belongs to the bacterial ribosomal protein bL25 family. CTC subfamily.</text>
</comment>
<organism>
    <name type="scientific">Helicobacter hepaticus (strain ATCC 51449 / 3B1)</name>
    <dbReference type="NCBI Taxonomy" id="235279"/>
    <lineage>
        <taxon>Bacteria</taxon>
        <taxon>Pseudomonadati</taxon>
        <taxon>Campylobacterota</taxon>
        <taxon>Epsilonproteobacteria</taxon>
        <taxon>Campylobacterales</taxon>
        <taxon>Helicobacteraceae</taxon>
        <taxon>Helicobacter</taxon>
    </lineage>
</organism>